<organism>
    <name type="scientific">Nitrosopumilus maritimus (strain SCM1)</name>
    <dbReference type="NCBI Taxonomy" id="436308"/>
    <lineage>
        <taxon>Archaea</taxon>
        <taxon>Nitrososphaerota</taxon>
        <taxon>Nitrososphaeria</taxon>
        <taxon>Nitrosopumilales</taxon>
        <taxon>Nitrosopumilaceae</taxon>
        <taxon>Nitrosopumilus</taxon>
    </lineage>
</organism>
<accession>A9A148</accession>
<feature type="chain" id="PRO_0000361811" description="Protein pelota homolog">
    <location>
        <begin position="1"/>
        <end position="349"/>
    </location>
</feature>
<reference key="1">
    <citation type="journal article" date="2010" name="Proc. Natl. Acad. Sci. U.S.A.">
        <title>Nitrosopumilus maritimus genome reveals unique mechanisms for nitrification and autotrophy in globally distributed marine crenarchaea.</title>
        <authorList>
            <person name="Walker C.B."/>
            <person name="de la Torre J.R."/>
            <person name="Klotz M.G."/>
            <person name="Urakawa H."/>
            <person name="Pinel N."/>
            <person name="Arp D.J."/>
            <person name="Brochier-Armanet C."/>
            <person name="Chain P.S."/>
            <person name="Chan P.P."/>
            <person name="Gollabgir A."/>
            <person name="Hemp J."/>
            <person name="Hugler M."/>
            <person name="Karr E.A."/>
            <person name="Konneke M."/>
            <person name="Shin M."/>
            <person name="Lawton T.J."/>
            <person name="Lowe T."/>
            <person name="Martens-Habbena W."/>
            <person name="Sayavedra-Soto L.A."/>
            <person name="Lang D."/>
            <person name="Sievert S.M."/>
            <person name="Rosenzweig A.C."/>
            <person name="Manning G."/>
            <person name="Stahl D.A."/>
        </authorList>
    </citation>
    <scope>NUCLEOTIDE SEQUENCE [LARGE SCALE GENOMIC DNA]</scope>
    <source>
        <strain>SCM1</strain>
    </source>
</reference>
<proteinExistence type="inferred from homology"/>
<dbReference type="EC" id="3.1.-.-" evidence="1"/>
<dbReference type="EMBL" id="CP000866">
    <property type="protein sequence ID" value="ABX12009.1"/>
    <property type="molecule type" value="Genomic_DNA"/>
</dbReference>
<dbReference type="RefSeq" id="WP_012214496.1">
    <property type="nucleotide sequence ID" value="NC_010085.1"/>
</dbReference>
<dbReference type="SMR" id="A9A148"/>
<dbReference type="FunCoup" id="A9A148">
    <property type="interactions" value="117"/>
</dbReference>
<dbReference type="STRING" id="436308.Nmar_0109"/>
<dbReference type="EnsemblBacteria" id="ABX12009">
    <property type="protein sequence ID" value="ABX12009"/>
    <property type="gene ID" value="Nmar_0109"/>
</dbReference>
<dbReference type="GeneID" id="5774233"/>
<dbReference type="KEGG" id="nmr:Nmar_0109"/>
<dbReference type="eggNOG" id="arCOG01741">
    <property type="taxonomic scope" value="Archaea"/>
</dbReference>
<dbReference type="HOGENOM" id="CLU_023334_0_0_2"/>
<dbReference type="InParanoid" id="A9A148"/>
<dbReference type="OrthoDB" id="31300at2157"/>
<dbReference type="PhylomeDB" id="A9A148"/>
<dbReference type="Proteomes" id="UP000000792">
    <property type="component" value="Chromosome"/>
</dbReference>
<dbReference type="GO" id="GO:0005737">
    <property type="term" value="C:cytoplasm"/>
    <property type="evidence" value="ECO:0000318"/>
    <property type="project" value="GO_Central"/>
</dbReference>
<dbReference type="GO" id="GO:0004519">
    <property type="term" value="F:endonuclease activity"/>
    <property type="evidence" value="ECO:0007669"/>
    <property type="project" value="UniProtKB-UniRule"/>
</dbReference>
<dbReference type="GO" id="GO:0046872">
    <property type="term" value="F:metal ion binding"/>
    <property type="evidence" value="ECO:0007669"/>
    <property type="project" value="UniProtKB-UniRule"/>
</dbReference>
<dbReference type="GO" id="GO:0070651">
    <property type="term" value="P:nonfunctional rRNA decay"/>
    <property type="evidence" value="ECO:0000318"/>
    <property type="project" value="GO_Central"/>
</dbReference>
<dbReference type="GO" id="GO:0070966">
    <property type="term" value="P:nuclear-transcribed mRNA catabolic process, no-go decay"/>
    <property type="evidence" value="ECO:0000318"/>
    <property type="project" value="GO_Central"/>
</dbReference>
<dbReference type="GO" id="GO:0070481">
    <property type="term" value="P:nuclear-transcribed mRNA catabolic process, non-stop decay"/>
    <property type="evidence" value="ECO:0007669"/>
    <property type="project" value="InterPro"/>
</dbReference>
<dbReference type="GO" id="GO:0032790">
    <property type="term" value="P:ribosome disassembly"/>
    <property type="evidence" value="ECO:0000318"/>
    <property type="project" value="GO_Central"/>
</dbReference>
<dbReference type="GO" id="GO:0071025">
    <property type="term" value="P:RNA surveillance"/>
    <property type="evidence" value="ECO:0007669"/>
    <property type="project" value="InterPro"/>
</dbReference>
<dbReference type="FunFam" id="2.30.30.870:FF:000008">
    <property type="entry name" value="Protein pelota homolog"/>
    <property type="match status" value="1"/>
</dbReference>
<dbReference type="Gene3D" id="3.30.1330.30">
    <property type="match status" value="1"/>
</dbReference>
<dbReference type="Gene3D" id="3.30.420.60">
    <property type="entry name" value="eRF1 domain 2"/>
    <property type="match status" value="1"/>
</dbReference>
<dbReference type="Gene3D" id="2.30.30.870">
    <property type="entry name" value="Pelota, domain A"/>
    <property type="match status" value="1"/>
</dbReference>
<dbReference type="HAMAP" id="MF_01853">
    <property type="entry name" value="PelO"/>
    <property type="match status" value="1"/>
</dbReference>
<dbReference type="InterPro" id="IPR042226">
    <property type="entry name" value="eFR1_2_sf"/>
</dbReference>
<dbReference type="InterPro" id="IPR005140">
    <property type="entry name" value="eRF1_1_Pelota"/>
</dbReference>
<dbReference type="InterPro" id="IPR005142">
    <property type="entry name" value="eRF1_3"/>
</dbReference>
<dbReference type="InterPro" id="IPR038069">
    <property type="entry name" value="Pelota/DOM34_N"/>
</dbReference>
<dbReference type="InterPro" id="IPR023521">
    <property type="entry name" value="Pelota_arc"/>
</dbReference>
<dbReference type="InterPro" id="IPR029064">
    <property type="entry name" value="Ribosomal_eL30-like_sf"/>
</dbReference>
<dbReference type="InterPro" id="IPR004405">
    <property type="entry name" value="Transl-rel_pelota"/>
</dbReference>
<dbReference type="NCBIfam" id="TIGR00111">
    <property type="entry name" value="pelota"/>
    <property type="match status" value="1"/>
</dbReference>
<dbReference type="PANTHER" id="PTHR10853">
    <property type="entry name" value="PELOTA"/>
    <property type="match status" value="1"/>
</dbReference>
<dbReference type="PANTHER" id="PTHR10853:SF0">
    <property type="entry name" value="PROTEIN PELOTA HOMOLOG"/>
    <property type="match status" value="1"/>
</dbReference>
<dbReference type="Pfam" id="PF03463">
    <property type="entry name" value="eRF1_1"/>
    <property type="match status" value="1"/>
</dbReference>
<dbReference type="Pfam" id="PF03465">
    <property type="entry name" value="eRF1_3"/>
    <property type="match status" value="1"/>
</dbReference>
<dbReference type="SMART" id="SM01194">
    <property type="entry name" value="eRF1_1"/>
    <property type="match status" value="1"/>
</dbReference>
<dbReference type="SUPFAM" id="SSF159065">
    <property type="entry name" value="Dom34/Pelota N-terminal domain-like"/>
    <property type="match status" value="1"/>
</dbReference>
<dbReference type="SUPFAM" id="SSF55315">
    <property type="entry name" value="L30e-like"/>
    <property type="match status" value="1"/>
</dbReference>
<dbReference type="SUPFAM" id="SSF53137">
    <property type="entry name" value="Translational machinery components"/>
    <property type="match status" value="1"/>
</dbReference>
<name>PELO_NITMS</name>
<comment type="function">
    <text evidence="1">May function in recognizing stalled ribosomes, interact with stem-loop structures in stalled mRNA molecules, and effect endonucleolytic cleavage of the mRNA. May play a role in the release non-functional ribosomes and degradation of damaged mRNAs. Has endoribonuclease activity.</text>
</comment>
<comment type="cofactor">
    <cofactor evidence="1">
        <name>a divalent metal cation</name>
        <dbReference type="ChEBI" id="CHEBI:60240"/>
    </cofactor>
</comment>
<comment type="subunit">
    <text evidence="1">Monomer.</text>
</comment>
<comment type="subcellular location">
    <subcellularLocation>
        <location evidence="1">Cytoplasm</location>
    </subcellularLocation>
</comment>
<comment type="domain">
    <text evidence="1">The N-terminal domain has the RNA-binding Sm fold. It harbors the endoribonuclease activity.</text>
</comment>
<comment type="similarity">
    <text evidence="1">Belongs to the eukaryotic release factor 1 family. Pelota subfamily.</text>
</comment>
<sequence length="349" mass="39131">MITKNIDENLISVIPEDSDDLLNLRRIIKENDKIIGDTTRVLKQDKDYSRPDKGERIKVRIALTVEKISLDDVLDRLRIRGTISESSNESVPHGTHHSFILKINDGITISKKKWLPFEKNLLESSNNQVGFVLVAIDTGDSGIARLRGTHLEFMPNIYSGSGGKRYKTNFNIEKFFEQVQQAISTILKEGDSIVIFGPGETKKRFANFIQKSQNLQKFKVQVVEGIDSGGEDGIYTFTKSNTMKEIMSDSKLAKVSSIIDEVMLLANKKSTKFTMGFDETFNANQMGAVESMVFSDKAIQDDEQKMIDFLNDMENKGVKMYSVDSSTDIGLRVTGLGGIVSLLRYSIES</sequence>
<gene>
    <name evidence="1" type="primary">pelA</name>
    <name type="ordered locus">Nmar_0109</name>
</gene>
<evidence type="ECO:0000255" key="1">
    <source>
        <dbReference type="HAMAP-Rule" id="MF_01853"/>
    </source>
</evidence>
<keyword id="KW-0963">Cytoplasm</keyword>
<keyword id="KW-0255">Endonuclease</keyword>
<keyword id="KW-0378">Hydrolase</keyword>
<keyword id="KW-0479">Metal-binding</keyword>
<keyword id="KW-0540">Nuclease</keyword>
<keyword id="KW-1185">Reference proteome</keyword>
<protein>
    <recommendedName>
        <fullName evidence="1">Protein pelota homolog</fullName>
        <ecNumber evidence="1">3.1.-.-</ecNumber>
    </recommendedName>
</protein>